<evidence type="ECO:0000255" key="1">
    <source>
        <dbReference type="HAMAP-Rule" id="MF_01321"/>
    </source>
</evidence>
<evidence type="ECO:0000305" key="2"/>
<gene>
    <name evidence="1" type="primary">rpoB</name>
    <name type="ordered locus">SSA_0176</name>
</gene>
<keyword id="KW-0240">DNA-directed RNA polymerase</keyword>
<keyword id="KW-0548">Nucleotidyltransferase</keyword>
<keyword id="KW-1185">Reference proteome</keyword>
<keyword id="KW-0804">Transcription</keyword>
<keyword id="KW-0808">Transferase</keyword>
<feature type="chain" id="PRO_0000300414" description="DNA-directed RNA polymerase subunit beta">
    <location>
        <begin position="1"/>
        <end position="1188"/>
    </location>
</feature>
<name>RPOB_STRSV</name>
<accession>A3CKD3</accession>
<reference key="1">
    <citation type="journal article" date="2007" name="J. Bacteriol.">
        <title>Genome of the opportunistic pathogen Streptococcus sanguinis.</title>
        <authorList>
            <person name="Xu P."/>
            <person name="Alves J.M."/>
            <person name="Kitten T."/>
            <person name="Brown A."/>
            <person name="Chen Z."/>
            <person name="Ozaki L.S."/>
            <person name="Manque P."/>
            <person name="Ge X."/>
            <person name="Serrano M.G."/>
            <person name="Puiu D."/>
            <person name="Hendricks S."/>
            <person name="Wang Y."/>
            <person name="Chaplin M.D."/>
            <person name="Akan D."/>
            <person name="Paik S."/>
            <person name="Peterson D.L."/>
            <person name="Macrina F.L."/>
            <person name="Buck G.A."/>
        </authorList>
    </citation>
    <scope>NUCLEOTIDE SEQUENCE [LARGE SCALE GENOMIC DNA]</scope>
    <source>
        <strain>SK36</strain>
    </source>
</reference>
<organism>
    <name type="scientific">Streptococcus sanguinis (strain SK36)</name>
    <dbReference type="NCBI Taxonomy" id="388919"/>
    <lineage>
        <taxon>Bacteria</taxon>
        <taxon>Bacillati</taxon>
        <taxon>Bacillota</taxon>
        <taxon>Bacilli</taxon>
        <taxon>Lactobacillales</taxon>
        <taxon>Streptococcaceae</taxon>
        <taxon>Streptococcus</taxon>
    </lineage>
</organism>
<comment type="function">
    <text evidence="1">DNA-dependent RNA polymerase catalyzes the transcription of DNA into RNA using the four ribonucleoside triphosphates as substrates.</text>
</comment>
<comment type="catalytic activity">
    <reaction evidence="1">
        <text>RNA(n) + a ribonucleoside 5'-triphosphate = RNA(n+1) + diphosphate</text>
        <dbReference type="Rhea" id="RHEA:21248"/>
        <dbReference type="Rhea" id="RHEA-COMP:14527"/>
        <dbReference type="Rhea" id="RHEA-COMP:17342"/>
        <dbReference type="ChEBI" id="CHEBI:33019"/>
        <dbReference type="ChEBI" id="CHEBI:61557"/>
        <dbReference type="ChEBI" id="CHEBI:140395"/>
        <dbReference type="EC" id="2.7.7.6"/>
    </reaction>
</comment>
<comment type="subunit">
    <text evidence="1">The RNAP catalytic core consists of 2 alpha, 1 beta, 1 beta' and 1 omega subunit. When a sigma factor is associated with the core the holoenzyme is formed, which can initiate transcription.</text>
</comment>
<comment type="similarity">
    <text evidence="1">Belongs to the RNA polymerase beta chain family.</text>
</comment>
<comment type="sequence caution" evidence="2">
    <conflict type="erroneous initiation">
        <sequence resource="EMBL-CDS" id="ABN43638"/>
    </conflict>
</comment>
<dbReference type="EC" id="2.7.7.6" evidence="1"/>
<dbReference type="EMBL" id="CP000387">
    <property type="protein sequence ID" value="ABN43638.1"/>
    <property type="status" value="ALT_INIT"/>
    <property type="molecule type" value="Genomic_DNA"/>
</dbReference>
<dbReference type="RefSeq" id="WP_033179096.1">
    <property type="nucleotide sequence ID" value="NC_009009.1"/>
</dbReference>
<dbReference type="RefSeq" id="YP_001034188.1">
    <property type="nucleotide sequence ID" value="NC_009009.1"/>
</dbReference>
<dbReference type="SMR" id="A3CKD3"/>
<dbReference type="STRING" id="388919.SSA_0176"/>
<dbReference type="KEGG" id="ssa:SSA_0176"/>
<dbReference type="PATRIC" id="fig|388919.9.peg.172"/>
<dbReference type="eggNOG" id="COG0085">
    <property type="taxonomic scope" value="Bacteria"/>
</dbReference>
<dbReference type="HOGENOM" id="CLU_000524_4_1_9"/>
<dbReference type="OrthoDB" id="9803954at2"/>
<dbReference type="Proteomes" id="UP000002148">
    <property type="component" value="Chromosome"/>
</dbReference>
<dbReference type="GO" id="GO:0000428">
    <property type="term" value="C:DNA-directed RNA polymerase complex"/>
    <property type="evidence" value="ECO:0007669"/>
    <property type="project" value="UniProtKB-KW"/>
</dbReference>
<dbReference type="GO" id="GO:0003677">
    <property type="term" value="F:DNA binding"/>
    <property type="evidence" value="ECO:0007669"/>
    <property type="project" value="UniProtKB-UniRule"/>
</dbReference>
<dbReference type="GO" id="GO:0003899">
    <property type="term" value="F:DNA-directed RNA polymerase activity"/>
    <property type="evidence" value="ECO:0007669"/>
    <property type="project" value="UniProtKB-UniRule"/>
</dbReference>
<dbReference type="GO" id="GO:0032549">
    <property type="term" value="F:ribonucleoside binding"/>
    <property type="evidence" value="ECO:0007669"/>
    <property type="project" value="InterPro"/>
</dbReference>
<dbReference type="GO" id="GO:0006351">
    <property type="term" value="P:DNA-templated transcription"/>
    <property type="evidence" value="ECO:0007669"/>
    <property type="project" value="UniProtKB-UniRule"/>
</dbReference>
<dbReference type="CDD" id="cd00653">
    <property type="entry name" value="RNA_pol_B_RPB2"/>
    <property type="match status" value="1"/>
</dbReference>
<dbReference type="Gene3D" id="2.40.50.100">
    <property type="match status" value="1"/>
</dbReference>
<dbReference type="Gene3D" id="2.40.50.150">
    <property type="match status" value="1"/>
</dbReference>
<dbReference type="Gene3D" id="3.90.1100.10">
    <property type="match status" value="3"/>
</dbReference>
<dbReference type="Gene3D" id="2.40.270.10">
    <property type="entry name" value="DNA-directed RNA polymerase, subunit 2, domain 6"/>
    <property type="match status" value="1"/>
</dbReference>
<dbReference type="Gene3D" id="3.90.1800.10">
    <property type="entry name" value="RNA polymerase alpha subunit dimerisation domain"/>
    <property type="match status" value="1"/>
</dbReference>
<dbReference type="Gene3D" id="3.90.1110.10">
    <property type="entry name" value="RNA polymerase Rpb2, domain 2"/>
    <property type="match status" value="1"/>
</dbReference>
<dbReference type="HAMAP" id="MF_01321">
    <property type="entry name" value="RNApol_bact_RpoB"/>
    <property type="match status" value="1"/>
</dbReference>
<dbReference type="InterPro" id="IPR019462">
    <property type="entry name" value="DNA-dir_RNA_pol_bsu_external_1"/>
</dbReference>
<dbReference type="InterPro" id="IPR015712">
    <property type="entry name" value="DNA-dir_RNA_pol_su2"/>
</dbReference>
<dbReference type="InterPro" id="IPR007120">
    <property type="entry name" value="DNA-dir_RNAP_su2_dom"/>
</dbReference>
<dbReference type="InterPro" id="IPR037033">
    <property type="entry name" value="DNA-dir_RNAP_su2_hyb_sf"/>
</dbReference>
<dbReference type="InterPro" id="IPR010243">
    <property type="entry name" value="RNA_pol_bsu_bac"/>
</dbReference>
<dbReference type="InterPro" id="IPR007121">
    <property type="entry name" value="RNA_pol_bsu_CS"/>
</dbReference>
<dbReference type="InterPro" id="IPR007644">
    <property type="entry name" value="RNA_pol_bsu_protrusion"/>
</dbReference>
<dbReference type="InterPro" id="IPR007642">
    <property type="entry name" value="RNA_pol_Rpb2_2"/>
</dbReference>
<dbReference type="InterPro" id="IPR037034">
    <property type="entry name" value="RNA_pol_Rpb2_2_sf"/>
</dbReference>
<dbReference type="InterPro" id="IPR007645">
    <property type="entry name" value="RNA_pol_Rpb2_3"/>
</dbReference>
<dbReference type="InterPro" id="IPR007641">
    <property type="entry name" value="RNA_pol_Rpb2_7"/>
</dbReference>
<dbReference type="InterPro" id="IPR014724">
    <property type="entry name" value="RNA_pol_RPB2_OB-fold"/>
</dbReference>
<dbReference type="NCBIfam" id="NF001616">
    <property type="entry name" value="PRK00405.1"/>
    <property type="match status" value="1"/>
</dbReference>
<dbReference type="NCBIfam" id="TIGR02013">
    <property type="entry name" value="rpoB"/>
    <property type="match status" value="1"/>
</dbReference>
<dbReference type="PANTHER" id="PTHR20856">
    <property type="entry name" value="DNA-DIRECTED RNA POLYMERASE I SUBUNIT 2"/>
    <property type="match status" value="1"/>
</dbReference>
<dbReference type="Pfam" id="PF04563">
    <property type="entry name" value="RNA_pol_Rpb2_1"/>
    <property type="match status" value="1"/>
</dbReference>
<dbReference type="Pfam" id="PF04561">
    <property type="entry name" value="RNA_pol_Rpb2_2"/>
    <property type="match status" value="2"/>
</dbReference>
<dbReference type="Pfam" id="PF04565">
    <property type="entry name" value="RNA_pol_Rpb2_3"/>
    <property type="match status" value="1"/>
</dbReference>
<dbReference type="Pfam" id="PF10385">
    <property type="entry name" value="RNA_pol_Rpb2_45"/>
    <property type="match status" value="1"/>
</dbReference>
<dbReference type="Pfam" id="PF00562">
    <property type="entry name" value="RNA_pol_Rpb2_6"/>
    <property type="match status" value="1"/>
</dbReference>
<dbReference type="Pfam" id="PF04560">
    <property type="entry name" value="RNA_pol_Rpb2_7"/>
    <property type="match status" value="1"/>
</dbReference>
<dbReference type="SUPFAM" id="SSF64484">
    <property type="entry name" value="beta and beta-prime subunits of DNA dependent RNA-polymerase"/>
    <property type="match status" value="1"/>
</dbReference>
<dbReference type="PROSITE" id="PS01166">
    <property type="entry name" value="RNA_POL_BETA"/>
    <property type="match status" value="1"/>
</dbReference>
<proteinExistence type="inferred from homology"/>
<protein>
    <recommendedName>
        <fullName evidence="1">DNA-directed RNA polymerase subunit beta</fullName>
        <shortName evidence="1">RNAP subunit beta</shortName>
        <ecNumber evidence="1">2.7.7.6</ecNumber>
    </recommendedName>
    <alternativeName>
        <fullName evidence="1">RNA polymerase subunit beta</fullName>
    </alternativeName>
    <alternativeName>
        <fullName evidence="1">Transcriptase subunit beta</fullName>
    </alternativeName>
</protein>
<sequence length="1188" mass="132611">MAGHEVRYGKHRTRRSFSRIKEVLDLPNLIEIQTDSFQDFLDHGLKEVFEDVLPISNFTNTMELEFVGYEIREPKYTLEEARIHDASYSAPIFVTFRLINKETGEIKTQEVFFGDFPIMTEMGTFIINGGERIIVSQLVRSPGVYFNDKVDKNGKVGYGSTVIPNRGAWLELETDSKDIAYTRIDRTRKIPFTTLVRALGFSGDDEILDIFGDSDLVRNTIEKDIHKNPMDSRTDEALKEIYERLRPGEPKTAESSRSLLEARFFDPHRYDLAAVGRYKINKKLSVKTRLLNQTIAEPLVDAETGEILVEAGTVMTRSVIDSIAEQLDNGLNKITYIPNDSAVLTAPVDLQKFKVVAPTDPDRVVTIIGNANPSDKVRIVTPADILAEMSYFLNLAEGIGRVDDIDHLGNRRIRAVGELLANQVRLGLSRMERNVRERMSVQDNEVLTPQQIINIRPVTAAIKEFFGSSQLSQFMDQHNPLSELSHKRRLSALGPGGLTRDRAGYEVRDVHYTHYGRMCPIETPEGPNIGLINNLSSYGHLNKYGFIQTPYRKVDREAGVVTNEIVWLTADEEDEFIVAQANSKLNEKGGFAEPIVMGRHQGNNQEFPSDQVDYMDVSPKQVVAVATACIPFLENDDSNRALMGANMQRQAVPLIDPKAPYVGTGMEYQAAHDSGAAVIAQHDGKVTYADADKVEVRREDGSLDVYQIQKFRRSNSGTAYNQRTLVKVGDVVEKGDFIADGPSMENGEMALGQNPIVAYMTWEGYNFEDAVIMSERLVKDDVYTSVHLEEYESETRDTKLGPEEITREIPNVGEDALRNLDEMGIIRIGAEVKEGDILVGKVTPKGEKDLSAEERLLHAIFGDKSREVRDTSLRVPHGADGVVRDVKIFTRANGDELQSGVNMLVRVYIAQKRKIKVGDKMAGRHGNKGVVSRIVPVEDMPYLPDGTPVDIMLNPLGVPSRMNIGQVMELHLGMAARNLGIHIATPVFDGASSEDLWDTVREAGMDSDAKTILYDGRTGEPFDNRVSVGVMYMIKLHHMVDDKLHARSVGPYSMVTQQPLGGKAQFGGQRFGEMEVWALEAYGASNVLQEILTYKSDDVNGRLKAYEAITKGKPIPKPGVPESFRVLVKELQSLGLDMRVLDEDDNEVELRDLDEGEDDDVIHVDDLEKAREKAAQEAKAAFEAEGKE</sequence>